<comment type="function">
    <text evidence="1">As a result of hemolysis, hemoglobin is found to accumulate in the kidney and is secreted in the urine. Haptoglobin captures, and combines with free plasma hemoglobin to allow hepatic recycling of heme iron and to prevent kidney damage. Haptoglobin also acts as an antioxidant, has antibacterial activity and plays a role in modulating many aspects of the acute phase response. Hemoglobin/haptoglobin complexes are rapidly cleared by the macrophage CD163 scavenger receptor expressed on the surface of liver Kupfer cells through an endocytic lysosomal degradation pathway (By similarity).</text>
</comment>
<comment type="subunit">
    <text evidence="2 3">Tetramer of two alpha and two beta chains; disulfide-linked (By similarity). The hemoglobin/haptoglobin complex is composed of a haptoglobin dimer bound to two hemoglobin alpha-beta dimers (By similarity). Interacts with CD163 (By similarity). Interacts with ERGIC3 (By similarity).</text>
</comment>
<comment type="subcellular location">
    <subcellularLocation>
        <location evidence="1">Secreted</location>
    </subcellularLocation>
</comment>
<comment type="domain">
    <text evidence="1">The beta chain mediates most of the interactions with both subunits of hemoglobin, while the alpha chain forms the homodimeric interface.</text>
</comment>
<comment type="similarity">
    <text evidence="5">Belongs to the peptidase S1 family.</text>
</comment>
<comment type="caution">
    <text evidence="7">Although homologous to serine proteases, it has lost all essential catalytic residues and has no enzymatic activity.</text>
</comment>
<proteinExistence type="evidence at transcript level"/>
<accession>Q5R5F6</accession>
<accession>Q5NVR4</accession>
<sequence length="347" mass="38496">MSALGAVIALLLWGQLFAVDSGNDVMDISDDGCPKPPQIAHGYVEHSVRYQCKNYYRLRTEGDGVYTLNSEKQWINKAVGDKLPECEAVCGKPKNPANPVQRILGGHLDAKGSFPWQAKMVSRHNLTTGATLINEQWLLTTAKNLFLNHSENATAKDIAPTLTLYVGKKQLVEIEKVVLHPNYSQVDIGLIKLKQKVPVNERVMPICLPSKDYAEVGRVGYVSGWGRNANFKFTEHLKYVMLPVADQDQCVRHYEGSTVPEKKTPKSPVGVQPILNEHTFCAGMSKYQEDTCYGDAGSAFAVHDLEEDTWYAAGILSFDKSCAVAEYGVYVKVTSIQDWVQKTIAKN</sequence>
<organism>
    <name type="scientific">Pongo abelii</name>
    <name type="common">Sumatran orangutan</name>
    <name type="synonym">Pongo pygmaeus abelii</name>
    <dbReference type="NCBI Taxonomy" id="9601"/>
    <lineage>
        <taxon>Eukaryota</taxon>
        <taxon>Metazoa</taxon>
        <taxon>Chordata</taxon>
        <taxon>Craniata</taxon>
        <taxon>Vertebrata</taxon>
        <taxon>Euteleostomi</taxon>
        <taxon>Mammalia</taxon>
        <taxon>Eutheria</taxon>
        <taxon>Euarchontoglires</taxon>
        <taxon>Primates</taxon>
        <taxon>Haplorrhini</taxon>
        <taxon>Catarrhini</taxon>
        <taxon>Hominidae</taxon>
        <taxon>Pongo</taxon>
    </lineage>
</organism>
<protein>
    <recommendedName>
        <fullName>Haptoglobin</fullName>
    </recommendedName>
    <component>
        <recommendedName>
            <fullName>Haptoglobin alpha chain</fullName>
        </recommendedName>
    </component>
    <component>
        <recommendedName>
            <fullName>Haptoglobin beta chain</fullName>
        </recommendedName>
    </component>
</protein>
<name>HPT_PONAB</name>
<keyword id="KW-0011">Acute phase</keyword>
<keyword id="KW-0044">Antibiotic</keyword>
<keyword id="KW-0929">Antimicrobial</keyword>
<keyword id="KW-0049">Antioxidant</keyword>
<keyword id="KW-1015">Disulfide bond</keyword>
<keyword id="KW-0325">Glycoprotein</keyword>
<keyword id="KW-0351">Hemoglobin-binding</keyword>
<keyword id="KW-0391">Immunity</keyword>
<keyword id="KW-1185">Reference proteome</keyword>
<keyword id="KW-0964">Secreted</keyword>
<keyword id="KW-0721">Serine protease homolog</keyword>
<keyword id="KW-0732">Signal</keyword>
<keyword id="KW-0768">Sushi</keyword>
<dbReference type="EMBL" id="CR860905">
    <property type="protein sequence ID" value="CAH93010.1"/>
    <property type="molecule type" value="mRNA"/>
</dbReference>
<dbReference type="EMBL" id="CR925941">
    <property type="protein sequence ID" value="CAI29599.1"/>
    <property type="molecule type" value="mRNA"/>
</dbReference>
<dbReference type="RefSeq" id="NP_001126778.1">
    <property type="nucleotide sequence ID" value="NM_001133306.1"/>
</dbReference>
<dbReference type="SMR" id="Q5R5F6"/>
<dbReference type="FunCoup" id="Q5R5F6">
    <property type="interactions" value="436"/>
</dbReference>
<dbReference type="STRING" id="9601.ENSPPYP00000008491"/>
<dbReference type="MEROPS" id="S01.972"/>
<dbReference type="GlyCosmos" id="Q5R5F6">
    <property type="glycosylation" value="4 sites, No reported glycans"/>
</dbReference>
<dbReference type="GeneID" id="100173782"/>
<dbReference type="KEGG" id="pon:100173782"/>
<dbReference type="CTD" id="3240"/>
<dbReference type="eggNOG" id="KOG3627">
    <property type="taxonomic scope" value="Eukaryota"/>
</dbReference>
<dbReference type="InParanoid" id="Q5R5F6"/>
<dbReference type="OrthoDB" id="6339452at2759"/>
<dbReference type="Proteomes" id="UP000001595">
    <property type="component" value="Unplaced"/>
</dbReference>
<dbReference type="GO" id="GO:0072562">
    <property type="term" value="C:blood microparticle"/>
    <property type="evidence" value="ECO:0007669"/>
    <property type="project" value="TreeGrafter"/>
</dbReference>
<dbReference type="GO" id="GO:0016209">
    <property type="term" value="F:antioxidant activity"/>
    <property type="evidence" value="ECO:0007669"/>
    <property type="project" value="UniProtKB-KW"/>
</dbReference>
<dbReference type="GO" id="GO:0030492">
    <property type="term" value="F:hemoglobin binding"/>
    <property type="evidence" value="ECO:0007669"/>
    <property type="project" value="UniProtKB-KW"/>
</dbReference>
<dbReference type="GO" id="GO:0006953">
    <property type="term" value="P:acute-phase response"/>
    <property type="evidence" value="ECO:0007669"/>
    <property type="project" value="UniProtKB-KW"/>
</dbReference>
<dbReference type="GO" id="GO:0042742">
    <property type="term" value="P:defense response to bacterium"/>
    <property type="evidence" value="ECO:0007669"/>
    <property type="project" value="UniProtKB-KW"/>
</dbReference>
<dbReference type="GO" id="GO:0002376">
    <property type="term" value="P:immune system process"/>
    <property type="evidence" value="ECO:0007669"/>
    <property type="project" value="UniProtKB-KW"/>
</dbReference>
<dbReference type="CDD" id="cd00033">
    <property type="entry name" value="CCP"/>
    <property type="match status" value="1"/>
</dbReference>
<dbReference type="CDD" id="cd00190">
    <property type="entry name" value="Tryp_SPc"/>
    <property type="match status" value="1"/>
</dbReference>
<dbReference type="FunFam" id="2.10.70.10:FF:000048">
    <property type="entry name" value="Haptoglobin"/>
    <property type="match status" value="1"/>
</dbReference>
<dbReference type="FunFam" id="2.40.10.10:FF:000027">
    <property type="entry name" value="Haptoglobin"/>
    <property type="match status" value="1"/>
</dbReference>
<dbReference type="FunFam" id="2.40.10.10:FF:000031">
    <property type="entry name" value="Haptoglobin"/>
    <property type="match status" value="1"/>
</dbReference>
<dbReference type="Gene3D" id="2.10.70.10">
    <property type="entry name" value="Complement Module, domain 1"/>
    <property type="match status" value="1"/>
</dbReference>
<dbReference type="Gene3D" id="2.40.10.10">
    <property type="entry name" value="Trypsin-like serine proteases"/>
    <property type="match status" value="2"/>
</dbReference>
<dbReference type="InterPro" id="IPR008292">
    <property type="entry name" value="Haptoglobin"/>
</dbReference>
<dbReference type="InterPro" id="IPR009003">
    <property type="entry name" value="Peptidase_S1_PA"/>
</dbReference>
<dbReference type="InterPro" id="IPR043504">
    <property type="entry name" value="Peptidase_S1_PA_chymotrypsin"/>
</dbReference>
<dbReference type="InterPro" id="IPR001314">
    <property type="entry name" value="Peptidase_S1A"/>
</dbReference>
<dbReference type="InterPro" id="IPR035976">
    <property type="entry name" value="Sushi/SCR/CCP_sf"/>
</dbReference>
<dbReference type="InterPro" id="IPR000436">
    <property type="entry name" value="Sushi_SCR_CCP_dom"/>
</dbReference>
<dbReference type="InterPro" id="IPR001254">
    <property type="entry name" value="Trypsin_dom"/>
</dbReference>
<dbReference type="PANTHER" id="PTHR24255">
    <property type="entry name" value="COMPLEMENT COMPONENT 1, S SUBCOMPONENT-RELATED"/>
    <property type="match status" value="1"/>
</dbReference>
<dbReference type="PANTHER" id="PTHR24255:SF30">
    <property type="entry name" value="HAPTOGLOBIN"/>
    <property type="match status" value="1"/>
</dbReference>
<dbReference type="Pfam" id="PF00089">
    <property type="entry name" value="Trypsin"/>
    <property type="match status" value="1"/>
</dbReference>
<dbReference type="PIRSF" id="PIRSF001137">
    <property type="entry name" value="Haptoglobin"/>
    <property type="match status" value="1"/>
</dbReference>
<dbReference type="PRINTS" id="PR00722">
    <property type="entry name" value="CHYMOTRYPSIN"/>
</dbReference>
<dbReference type="SMART" id="SM00020">
    <property type="entry name" value="Tryp_SPc"/>
    <property type="match status" value="1"/>
</dbReference>
<dbReference type="SUPFAM" id="SSF57535">
    <property type="entry name" value="Complement control module/SCR domain"/>
    <property type="match status" value="1"/>
</dbReference>
<dbReference type="SUPFAM" id="SSF50494">
    <property type="entry name" value="Trypsin-like serine proteases"/>
    <property type="match status" value="1"/>
</dbReference>
<dbReference type="PROSITE" id="PS50923">
    <property type="entry name" value="SUSHI"/>
    <property type="match status" value="1"/>
</dbReference>
<dbReference type="PROSITE" id="PS50240">
    <property type="entry name" value="TRYPSIN_DOM"/>
    <property type="match status" value="1"/>
</dbReference>
<feature type="signal peptide" evidence="4">
    <location>
        <begin position="1"/>
        <end position="18"/>
    </location>
</feature>
<feature type="chain" id="PRO_0000028477" description="Haptoglobin">
    <location>
        <begin position="19"/>
        <end position="347"/>
    </location>
</feature>
<feature type="chain" id="PRO_0000028478" description="Haptoglobin alpha chain">
    <location>
        <begin position="19"/>
        <end position="101"/>
    </location>
</feature>
<feature type="chain" id="PRO_0000028479" description="Haptoglobin beta chain">
    <location>
        <begin position="103"/>
        <end position="347"/>
    </location>
</feature>
<feature type="domain" description="Sushi" evidence="6">
    <location>
        <begin position="31"/>
        <end position="88"/>
    </location>
</feature>
<feature type="domain" description="Peptidase S1" evidence="5">
    <location>
        <begin position="103"/>
        <end position="347"/>
    </location>
</feature>
<feature type="region of interest" description="Interaction with CD163" evidence="1">
    <location>
        <begin position="259"/>
        <end position="264"/>
    </location>
</feature>
<feature type="glycosylation site" description="N-linked (GlcNAc...) asparagine" evidence="1">
    <location>
        <position position="125"/>
    </location>
</feature>
<feature type="glycosylation site" description="N-linked (GlcNAc...) asparagine" evidence="1">
    <location>
        <position position="148"/>
    </location>
</feature>
<feature type="glycosylation site" description="N-linked (GlcNAc...) asparagine" evidence="1">
    <location>
        <position position="152"/>
    </location>
</feature>
<feature type="glycosylation site" description="N-linked (GlcNAc...) asparagine" evidence="1">
    <location>
        <position position="182"/>
    </location>
</feature>
<feature type="disulfide bond" description="Interchain" evidence="1">
    <location>
        <position position="33"/>
    </location>
</feature>
<feature type="disulfide bond" evidence="1">
    <location>
        <begin position="52"/>
        <end position="86"/>
    </location>
</feature>
<feature type="disulfide bond" description="Interchain (between alpha and beta chains)" evidence="5 6">
    <location>
        <begin position="90"/>
        <end position="207"/>
    </location>
</feature>
<feature type="disulfide bond" evidence="1">
    <location>
        <begin position="250"/>
        <end position="281"/>
    </location>
</feature>
<feature type="disulfide bond" evidence="1">
    <location>
        <begin position="292"/>
        <end position="322"/>
    </location>
</feature>
<feature type="sequence conflict" description="In Ref. 1; CAI29599." evidence="7" ref="1">
    <original>M</original>
    <variation>T</variation>
    <location>
        <position position="26"/>
    </location>
</feature>
<feature type="sequence conflict" description="In Ref. 1; CAI29599." evidence="7" ref="1">
    <original>E</original>
    <variation>D</variation>
    <location>
        <position position="235"/>
    </location>
</feature>
<reference key="1">
    <citation type="submission" date="2004-11" db="EMBL/GenBank/DDBJ databases">
        <authorList>
            <consortium name="The German cDNA consortium"/>
        </authorList>
    </citation>
    <scope>NUCLEOTIDE SEQUENCE [LARGE SCALE MRNA]</scope>
    <source>
        <tissue>Liver</tissue>
    </source>
</reference>
<evidence type="ECO:0000250" key="1"/>
<evidence type="ECO:0000250" key="2">
    <source>
        <dbReference type="UniProtKB" id="P00738"/>
    </source>
</evidence>
<evidence type="ECO:0000250" key="3">
    <source>
        <dbReference type="UniProtKB" id="Q8SPS7"/>
    </source>
</evidence>
<evidence type="ECO:0000255" key="4"/>
<evidence type="ECO:0000255" key="5">
    <source>
        <dbReference type="PROSITE-ProRule" id="PRU00274"/>
    </source>
</evidence>
<evidence type="ECO:0000255" key="6">
    <source>
        <dbReference type="PROSITE-ProRule" id="PRU00302"/>
    </source>
</evidence>
<evidence type="ECO:0000305" key="7"/>
<gene>
    <name type="primary">HP</name>
</gene>